<proteinExistence type="evidence at protein level"/>
<feature type="chain" id="PRO_0000253817" description="MIOREX complex component 8">
    <location>
        <begin position="1"/>
        <end position="314"/>
    </location>
</feature>
<feature type="domain" description="EngB-type G" evidence="1">
    <location>
        <begin position="132"/>
        <end position="312"/>
    </location>
</feature>
<feature type="binding site" evidence="1">
    <location>
        <begin position="140"/>
        <end position="147"/>
    </location>
    <ligand>
        <name>GTP</name>
        <dbReference type="ChEBI" id="CHEBI:37565"/>
    </ligand>
</feature>
<feature type="binding site" evidence="1">
    <location>
        <position position="147"/>
    </location>
    <ligand>
        <name>Mg(2+)</name>
        <dbReference type="ChEBI" id="CHEBI:18420"/>
    </ligand>
</feature>
<feature type="binding site" evidence="1">
    <location>
        <begin position="173"/>
        <end position="177"/>
    </location>
    <ligand>
        <name>GTP</name>
        <dbReference type="ChEBI" id="CHEBI:37565"/>
    </ligand>
</feature>
<feature type="binding site" evidence="1">
    <location>
        <position position="175"/>
    </location>
    <ligand>
        <name>Mg(2+)</name>
        <dbReference type="ChEBI" id="CHEBI:18420"/>
    </ligand>
</feature>
<feature type="binding site" evidence="1">
    <location>
        <begin position="191"/>
        <end position="194"/>
    </location>
    <ligand>
        <name>GTP</name>
        <dbReference type="ChEBI" id="CHEBI:37565"/>
    </ligand>
</feature>
<feature type="binding site" evidence="1">
    <location>
        <begin position="253"/>
        <end position="256"/>
    </location>
    <ligand>
        <name>GTP</name>
        <dbReference type="ChEBI" id="CHEBI:37565"/>
    </ligand>
</feature>
<feature type="binding site" evidence="1">
    <location>
        <begin position="290"/>
        <end position="292"/>
    </location>
    <ligand>
        <name>GTP</name>
        <dbReference type="ChEBI" id="CHEBI:37565"/>
    </ligand>
</feature>
<accession>Q05473</accession>
<accession>D6VSW8</accession>
<dbReference type="EMBL" id="U51032">
    <property type="protein sequence ID" value="AAB64772.1"/>
    <property type="molecule type" value="Genomic_DNA"/>
</dbReference>
<dbReference type="EMBL" id="BK006938">
    <property type="protein sequence ID" value="DAA12178.1"/>
    <property type="molecule type" value="Genomic_DNA"/>
</dbReference>
<dbReference type="PIR" id="S70101">
    <property type="entry name" value="S70101"/>
</dbReference>
<dbReference type="RefSeq" id="NP_010623.3">
    <property type="nucleotide sequence ID" value="NM_001180644.3"/>
</dbReference>
<dbReference type="SMR" id="Q05473"/>
<dbReference type="BioGRID" id="32393">
    <property type="interactions" value="78"/>
</dbReference>
<dbReference type="FunCoup" id="Q05473">
    <property type="interactions" value="303"/>
</dbReference>
<dbReference type="STRING" id="4932.YDR336W"/>
<dbReference type="PaxDb" id="4932-YDR336W"/>
<dbReference type="PeptideAtlas" id="Q05473"/>
<dbReference type="EnsemblFungi" id="YDR336W_mRNA">
    <property type="protein sequence ID" value="YDR336W"/>
    <property type="gene ID" value="YDR336W"/>
</dbReference>
<dbReference type="GeneID" id="851936"/>
<dbReference type="KEGG" id="sce:YDR336W"/>
<dbReference type="AGR" id="SGD:S000002744"/>
<dbReference type="SGD" id="S000002744">
    <property type="gene designation" value="MRX8"/>
</dbReference>
<dbReference type="VEuPathDB" id="FungiDB:YDR336W"/>
<dbReference type="eggNOG" id="KOG2486">
    <property type="taxonomic scope" value="Eukaryota"/>
</dbReference>
<dbReference type="HOGENOM" id="CLU_062874_0_0_1"/>
<dbReference type="InParanoid" id="Q05473"/>
<dbReference type="OMA" id="FTKTINC"/>
<dbReference type="OrthoDB" id="391988at2759"/>
<dbReference type="BioCyc" id="YEAST:G3O-29892-MONOMER"/>
<dbReference type="BioGRID-ORCS" id="851936">
    <property type="hits" value="0 hits in 10 CRISPR screens"/>
</dbReference>
<dbReference type="PRO" id="PR:Q05473"/>
<dbReference type="Proteomes" id="UP000002311">
    <property type="component" value="Chromosome IV"/>
</dbReference>
<dbReference type="RNAct" id="Q05473">
    <property type="molecule type" value="protein"/>
</dbReference>
<dbReference type="GO" id="GO:0099617">
    <property type="term" value="C:matrix side of mitochondrial inner membrane"/>
    <property type="evidence" value="ECO:0000314"/>
    <property type="project" value="SGD"/>
</dbReference>
<dbReference type="GO" id="GO:0005739">
    <property type="term" value="C:mitochondrion"/>
    <property type="evidence" value="ECO:0000318"/>
    <property type="project" value="GO_Central"/>
</dbReference>
<dbReference type="GO" id="GO:0005525">
    <property type="term" value="F:GTP binding"/>
    <property type="evidence" value="ECO:0007669"/>
    <property type="project" value="UniProtKB-KW"/>
</dbReference>
<dbReference type="GO" id="GO:0019001">
    <property type="term" value="F:guanyl nucleotide binding"/>
    <property type="evidence" value="ECO:0000315"/>
    <property type="project" value="SGD"/>
</dbReference>
<dbReference type="GO" id="GO:0046872">
    <property type="term" value="F:metal ion binding"/>
    <property type="evidence" value="ECO:0007669"/>
    <property type="project" value="UniProtKB-KW"/>
</dbReference>
<dbReference type="GO" id="GO:0070125">
    <property type="term" value="P:mitochondrial translational elongation"/>
    <property type="evidence" value="ECO:0000315"/>
    <property type="project" value="SGD"/>
</dbReference>
<dbReference type="GO" id="GO:0070124">
    <property type="term" value="P:mitochondrial translational initiation"/>
    <property type="evidence" value="ECO:0000315"/>
    <property type="project" value="SGD"/>
</dbReference>
<dbReference type="CDD" id="cd01876">
    <property type="entry name" value="YihA_EngB"/>
    <property type="match status" value="1"/>
</dbReference>
<dbReference type="Gene3D" id="3.40.50.300">
    <property type="entry name" value="P-loop containing nucleotide triphosphate hydrolases"/>
    <property type="match status" value="1"/>
</dbReference>
<dbReference type="InterPro" id="IPR052279">
    <property type="entry name" value="EngB_GTPase"/>
</dbReference>
<dbReference type="InterPro" id="IPR030393">
    <property type="entry name" value="G_ENGB_dom"/>
</dbReference>
<dbReference type="InterPro" id="IPR006073">
    <property type="entry name" value="GTP-bd"/>
</dbReference>
<dbReference type="InterPro" id="IPR027417">
    <property type="entry name" value="P-loop_NTPase"/>
</dbReference>
<dbReference type="PANTHER" id="PTHR46498">
    <property type="entry name" value="GTP-BINDING PROTEIN 8"/>
    <property type="match status" value="1"/>
</dbReference>
<dbReference type="PANTHER" id="PTHR46498:SF1">
    <property type="entry name" value="GTP-BINDING PROTEIN 8"/>
    <property type="match status" value="1"/>
</dbReference>
<dbReference type="Pfam" id="PF01926">
    <property type="entry name" value="MMR_HSR1"/>
    <property type="match status" value="1"/>
</dbReference>
<dbReference type="SUPFAM" id="SSF52540">
    <property type="entry name" value="P-loop containing nucleoside triphosphate hydrolases"/>
    <property type="match status" value="1"/>
</dbReference>
<dbReference type="PROSITE" id="PS51706">
    <property type="entry name" value="G_ENGB"/>
    <property type="match status" value="1"/>
</dbReference>
<name>MRX8_YEAST</name>
<keyword id="KW-0342">GTP-binding</keyword>
<keyword id="KW-0460">Magnesium</keyword>
<keyword id="KW-0479">Metal-binding</keyword>
<keyword id="KW-0496">Mitochondrion</keyword>
<keyword id="KW-0547">Nucleotide-binding</keyword>
<keyword id="KW-1185">Reference proteome</keyword>
<keyword id="KW-0832">Ubl conjugation</keyword>
<comment type="function">
    <text evidence="3">Component of MIOREX complexes, large expressome-like assemblies of ribosomes with factors involved in all the steps of post-transcriptional gene expression.</text>
</comment>
<comment type="cofactor">
    <cofactor evidence="1">
        <name>Mg(2+)</name>
        <dbReference type="ChEBI" id="CHEBI:18420"/>
    </cofactor>
</comment>
<comment type="subunit">
    <text evidence="3">Associates with the mitochondrial ribosome.</text>
</comment>
<comment type="subcellular location">
    <subcellularLocation>
        <location evidence="5">Mitochondrion</location>
    </subcellularLocation>
</comment>
<comment type="PTM">
    <text evidence="2">Sumoylated upon ethanol stress.</text>
</comment>
<comment type="similarity">
    <text evidence="1">Belongs to the TRAFAC class TrmE-Era-EngA-EngB-Septin-like GTPase superfamily. EngB GTPase family.</text>
</comment>
<reference key="1">
    <citation type="journal article" date="1997" name="Nature">
        <title>The nucleotide sequence of Saccharomyces cerevisiae chromosome IV.</title>
        <authorList>
            <person name="Jacq C."/>
            <person name="Alt-Moerbe J."/>
            <person name="Andre B."/>
            <person name="Arnold W."/>
            <person name="Bahr A."/>
            <person name="Ballesta J.P.G."/>
            <person name="Bargues M."/>
            <person name="Baron L."/>
            <person name="Becker A."/>
            <person name="Biteau N."/>
            <person name="Bloecker H."/>
            <person name="Blugeon C."/>
            <person name="Boskovic J."/>
            <person name="Brandt P."/>
            <person name="Brueckner M."/>
            <person name="Buitrago M.J."/>
            <person name="Coster F."/>
            <person name="Delaveau T."/>
            <person name="del Rey F."/>
            <person name="Dujon B."/>
            <person name="Eide L.G."/>
            <person name="Garcia-Cantalejo J.M."/>
            <person name="Goffeau A."/>
            <person name="Gomez-Peris A."/>
            <person name="Granotier C."/>
            <person name="Hanemann V."/>
            <person name="Hankeln T."/>
            <person name="Hoheisel J.D."/>
            <person name="Jaeger W."/>
            <person name="Jimenez A."/>
            <person name="Jonniaux J.-L."/>
            <person name="Kraemer C."/>
            <person name="Kuester H."/>
            <person name="Laamanen P."/>
            <person name="Legros Y."/>
            <person name="Louis E.J."/>
            <person name="Moeller-Rieker S."/>
            <person name="Monnet A."/>
            <person name="Moro M."/>
            <person name="Mueller-Auer S."/>
            <person name="Nussbaumer B."/>
            <person name="Paricio N."/>
            <person name="Paulin L."/>
            <person name="Perea J."/>
            <person name="Perez-Alonso M."/>
            <person name="Perez-Ortin J.E."/>
            <person name="Pohl T.M."/>
            <person name="Prydz H."/>
            <person name="Purnelle B."/>
            <person name="Rasmussen S.W."/>
            <person name="Remacha M.A."/>
            <person name="Revuelta J.L."/>
            <person name="Rieger M."/>
            <person name="Salom D."/>
            <person name="Saluz H.P."/>
            <person name="Saiz J.E."/>
            <person name="Saren A.-M."/>
            <person name="Schaefer M."/>
            <person name="Scharfe M."/>
            <person name="Schmidt E.R."/>
            <person name="Schneider C."/>
            <person name="Scholler P."/>
            <person name="Schwarz S."/>
            <person name="Soler-Mira A."/>
            <person name="Urrestarazu L.A."/>
            <person name="Verhasselt P."/>
            <person name="Vissers S."/>
            <person name="Voet M."/>
            <person name="Volckaert G."/>
            <person name="Wagner G."/>
            <person name="Wambutt R."/>
            <person name="Wedler E."/>
            <person name="Wedler H."/>
            <person name="Woelfl S."/>
            <person name="Harris D.E."/>
            <person name="Bowman S."/>
            <person name="Brown D."/>
            <person name="Churcher C.M."/>
            <person name="Connor R."/>
            <person name="Dedman K."/>
            <person name="Gentles S."/>
            <person name="Hamlin N."/>
            <person name="Hunt S."/>
            <person name="Jones L."/>
            <person name="McDonald S."/>
            <person name="Murphy L.D."/>
            <person name="Niblett D."/>
            <person name="Odell C."/>
            <person name="Oliver K."/>
            <person name="Rajandream M.A."/>
            <person name="Richards C."/>
            <person name="Shore L."/>
            <person name="Walsh S.V."/>
            <person name="Barrell B.G."/>
            <person name="Dietrich F.S."/>
            <person name="Mulligan J.T."/>
            <person name="Allen E."/>
            <person name="Araujo R."/>
            <person name="Aviles E."/>
            <person name="Berno A."/>
            <person name="Carpenter J."/>
            <person name="Chen E."/>
            <person name="Cherry J.M."/>
            <person name="Chung E."/>
            <person name="Duncan M."/>
            <person name="Hunicke-Smith S."/>
            <person name="Hyman R.W."/>
            <person name="Komp C."/>
            <person name="Lashkari D."/>
            <person name="Lew H."/>
            <person name="Lin D."/>
            <person name="Mosedale D."/>
            <person name="Nakahara K."/>
            <person name="Namath A."/>
            <person name="Oefner P."/>
            <person name="Oh C."/>
            <person name="Petel F.X."/>
            <person name="Roberts D."/>
            <person name="Schramm S."/>
            <person name="Schroeder M."/>
            <person name="Shogren T."/>
            <person name="Shroff N."/>
            <person name="Winant A."/>
            <person name="Yelton M.A."/>
            <person name="Botstein D."/>
            <person name="Davis R.W."/>
            <person name="Johnston M."/>
            <person name="Andrews S."/>
            <person name="Brinkman R."/>
            <person name="Cooper J."/>
            <person name="Ding H."/>
            <person name="Du Z."/>
            <person name="Favello A."/>
            <person name="Fulton L."/>
            <person name="Gattung S."/>
            <person name="Greco T."/>
            <person name="Hallsworth K."/>
            <person name="Hawkins J."/>
            <person name="Hillier L.W."/>
            <person name="Jier M."/>
            <person name="Johnson D."/>
            <person name="Johnston L."/>
            <person name="Kirsten J."/>
            <person name="Kucaba T."/>
            <person name="Langston Y."/>
            <person name="Latreille P."/>
            <person name="Le T."/>
            <person name="Mardis E."/>
            <person name="Menezes S."/>
            <person name="Miller N."/>
            <person name="Nhan M."/>
            <person name="Pauley A."/>
            <person name="Peluso D."/>
            <person name="Rifkin L."/>
            <person name="Riles L."/>
            <person name="Taich A."/>
            <person name="Trevaskis E."/>
            <person name="Vignati D."/>
            <person name="Wilcox L."/>
            <person name="Wohldman P."/>
            <person name="Vaudin M."/>
            <person name="Wilson R."/>
            <person name="Waterston R."/>
            <person name="Albermann K."/>
            <person name="Hani J."/>
            <person name="Heumann K."/>
            <person name="Kleine K."/>
            <person name="Mewes H.-W."/>
            <person name="Zollner A."/>
            <person name="Zaccaria P."/>
        </authorList>
    </citation>
    <scope>NUCLEOTIDE SEQUENCE [LARGE SCALE GENOMIC DNA]</scope>
    <source>
        <strain>ATCC 204508 / S288c</strain>
    </source>
</reference>
<reference key="2">
    <citation type="journal article" date="2014" name="G3 (Bethesda)">
        <title>The reference genome sequence of Saccharomyces cerevisiae: Then and now.</title>
        <authorList>
            <person name="Engel S.R."/>
            <person name="Dietrich F.S."/>
            <person name="Fisk D.G."/>
            <person name="Binkley G."/>
            <person name="Balakrishnan R."/>
            <person name="Costanzo M.C."/>
            <person name="Dwight S.S."/>
            <person name="Hitz B.C."/>
            <person name="Karra K."/>
            <person name="Nash R.S."/>
            <person name="Weng S."/>
            <person name="Wong E.D."/>
            <person name="Lloyd P."/>
            <person name="Skrzypek M.S."/>
            <person name="Miyasato S.R."/>
            <person name="Simison M."/>
            <person name="Cherry J.M."/>
        </authorList>
    </citation>
    <scope>GENOME REANNOTATION</scope>
    <source>
        <strain>ATCC 204508 / S288c</strain>
    </source>
</reference>
<reference key="3">
    <citation type="journal article" date="2004" name="J. Biol. Chem.">
        <title>Global analyses of sumoylated proteins in Saccharomyces cerevisiae. Induction of protein sumoylation by cellular stresses.</title>
        <authorList>
            <person name="Zhou W."/>
            <person name="Ryan J.J."/>
            <person name="Zhou H."/>
        </authorList>
    </citation>
    <scope>SUMOYLATION [LARGE SCALE ANALYSIS]</scope>
    <scope>IDENTIFICATION BY MASS SPECTROMETRY</scope>
</reference>
<reference key="4">
    <citation type="journal article" date="2015" name="Cell Rep.">
        <title>Organization of mitochondrial gene expression in two distinct ribosome-containing assemblies.</title>
        <authorList>
            <person name="Kehrein K."/>
            <person name="Schilling R."/>
            <person name="Moller-Hergt B.V."/>
            <person name="Wurm C.A."/>
            <person name="Jakobs S."/>
            <person name="Lamkemeyer T."/>
            <person name="Langer T."/>
            <person name="Ott M."/>
        </authorList>
    </citation>
    <scope>FUNCTION</scope>
    <scope>SUBUNIT</scope>
</reference>
<gene>
    <name evidence="4" type="primary">MRX8</name>
    <name evidence="6" type="ordered locus">YDR336W</name>
</gene>
<sequence>MEQLCKRYVHTPAAFIQNIVANTKRTTLATQLSVEKAKKKVPKTALKKKLNSRPKERLPNWLKLNDVFNIHYEKPSNSDINKVNRFFNKAKVEFEWCAASFDDIPENPFLNKKSHKDILKDHGECGTTLIDTLPEVIFLGGTNVGKSSILNNITTSHVSRDLGSLARVSKTTGFTKTLNCYNVGNRLRMIDSPGYGFNSSKEQGKVTLQYLLERKQLVRCFLLLAGDKEINNTDNMIIQYIHEHGVPFEVVFTKMDKVKDLNKFKKKVMSSGLMDLPTLPRLVLTNSLTSSTSPKRFGIDLLRYVIFQSCGLIL</sequence>
<organism>
    <name type="scientific">Saccharomyces cerevisiae (strain ATCC 204508 / S288c)</name>
    <name type="common">Baker's yeast</name>
    <dbReference type="NCBI Taxonomy" id="559292"/>
    <lineage>
        <taxon>Eukaryota</taxon>
        <taxon>Fungi</taxon>
        <taxon>Dikarya</taxon>
        <taxon>Ascomycota</taxon>
        <taxon>Saccharomycotina</taxon>
        <taxon>Saccharomycetes</taxon>
        <taxon>Saccharomycetales</taxon>
        <taxon>Saccharomycetaceae</taxon>
        <taxon>Saccharomyces</taxon>
    </lineage>
</organism>
<protein>
    <recommendedName>
        <fullName evidence="5">MIOREX complex component 8</fullName>
    </recommendedName>
    <alternativeName>
        <fullName evidence="4">Mitochondrial organization of gene expression protein 8</fullName>
    </alternativeName>
</protein>
<evidence type="ECO:0000255" key="1">
    <source>
        <dbReference type="PROSITE-ProRule" id="PRU01043"/>
    </source>
</evidence>
<evidence type="ECO:0000269" key="2">
    <source>
    </source>
</evidence>
<evidence type="ECO:0000269" key="3">
    <source>
    </source>
</evidence>
<evidence type="ECO:0000303" key="4">
    <source>
    </source>
</evidence>
<evidence type="ECO:0000305" key="5">
    <source>
    </source>
</evidence>
<evidence type="ECO:0000312" key="6">
    <source>
        <dbReference type="SGD" id="S000002744"/>
    </source>
</evidence>